<protein>
    <recommendedName>
        <fullName>Peroxisomal N(1)-acetyl-spermine/spermidine oxidase</fullName>
        <ecNumber evidence="4">1.5.3.13</ecNumber>
    </recommendedName>
    <alternativeName>
        <fullName>Polyamine oxidase</fullName>
    </alternativeName>
</protein>
<name>PAOX_HUMAN</name>
<organism>
    <name type="scientific">Homo sapiens</name>
    <name type="common">Human</name>
    <dbReference type="NCBI Taxonomy" id="9606"/>
    <lineage>
        <taxon>Eukaryota</taxon>
        <taxon>Metazoa</taxon>
        <taxon>Chordata</taxon>
        <taxon>Craniata</taxon>
        <taxon>Vertebrata</taxon>
        <taxon>Euteleostomi</taxon>
        <taxon>Mammalia</taxon>
        <taxon>Eutheria</taxon>
        <taxon>Euarchontoglires</taxon>
        <taxon>Primates</taxon>
        <taxon>Haplorrhini</taxon>
        <taxon>Catarrhini</taxon>
        <taxon>Hominidae</taxon>
        <taxon>Homo</taxon>
    </lineage>
</organism>
<accession>Q6QHF9</accession>
<accession>D3DXI6</accession>
<accession>Q5VWY0</accession>
<accession>Q6QHF5</accession>
<accession>Q6QHF6</accession>
<accession>Q6QHF7</accession>
<accession>Q6QHF8</accession>
<accession>Q6QHG0</accession>
<accession>Q6QHG1</accession>
<accession>Q6QHG2</accession>
<accession>Q6QHG3</accession>
<accession>Q6QHG4</accession>
<accession>Q6QHG5</accession>
<accession>Q6QHG6</accession>
<accession>Q86WP9</accession>
<accession>Q8N555</accession>
<accession>Q8NCX3</accession>
<dbReference type="EC" id="1.5.3.13" evidence="4"/>
<dbReference type="EMBL" id="AF226657">
    <property type="protein sequence ID" value="AAN40706.1"/>
    <property type="molecule type" value="mRNA"/>
</dbReference>
<dbReference type="EMBL" id="AF312698">
    <property type="protein sequence ID" value="AAO63265.1"/>
    <property type="molecule type" value="mRNA"/>
</dbReference>
<dbReference type="EMBL" id="AY541513">
    <property type="protein sequence ID" value="AAS64373.1"/>
    <property type="molecule type" value="mRNA"/>
</dbReference>
<dbReference type="EMBL" id="AY541514">
    <property type="protein sequence ID" value="AAS64374.1"/>
    <property type="molecule type" value="mRNA"/>
</dbReference>
<dbReference type="EMBL" id="AY541515">
    <property type="protein sequence ID" value="AAS64375.1"/>
    <property type="molecule type" value="mRNA"/>
</dbReference>
<dbReference type="EMBL" id="AY541516">
    <property type="protein sequence ID" value="AAS64376.1"/>
    <property type="molecule type" value="mRNA"/>
</dbReference>
<dbReference type="EMBL" id="AY541517">
    <property type="protein sequence ID" value="AAS64377.1"/>
    <property type="status" value="ALT_FRAME"/>
    <property type="molecule type" value="mRNA"/>
</dbReference>
<dbReference type="EMBL" id="AY541518">
    <property type="protein sequence ID" value="AAS64378.1"/>
    <property type="molecule type" value="mRNA"/>
</dbReference>
<dbReference type="EMBL" id="AY541519">
    <property type="protein sequence ID" value="AAS64379.1"/>
    <property type="status" value="ALT_SEQ"/>
    <property type="molecule type" value="mRNA"/>
</dbReference>
<dbReference type="EMBL" id="AY541520">
    <property type="protein sequence ID" value="AAS64380.1"/>
    <property type="status" value="ALT_SEQ"/>
    <property type="molecule type" value="mRNA"/>
</dbReference>
<dbReference type="EMBL" id="AY541521">
    <property type="protein sequence ID" value="AAS64381.1"/>
    <property type="status" value="ALT_SEQ"/>
    <property type="molecule type" value="mRNA"/>
</dbReference>
<dbReference type="EMBL" id="AY541522">
    <property type="protein sequence ID" value="AAS64382.1"/>
    <property type="status" value="ALT_SEQ"/>
    <property type="molecule type" value="mRNA"/>
</dbReference>
<dbReference type="EMBL" id="AY541523">
    <property type="protein sequence ID" value="AAS64383.1"/>
    <property type="status" value="ALT_SEQ"/>
    <property type="molecule type" value="mRNA"/>
</dbReference>
<dbReference type="EMBL" id="AY541524">
    <property type="protein sequence ID" value="AAS64384.1"/>
    <property type="status" value="ALT_SEQ"/>
    <property type="molecule type" value="mRNA"/>
</dbReference>
<dbReference type="EMBL" id="AY358418">
    <property type="protein sequence ID" value="AAQ88784.1"/>
    <property type="status" value="ALT_SEQ"/>
    <property type="molecule type" value="mRNA"/>
</dbReference>
<dbReference type="EMBL" id="AL360181">
    <property type="status" value="NOT_ANNOTATED_CDS"/>
    <property type="molecule type" value="Genomic_DNA"/>
</dbReference>
<dbReference type="EMBL" id="CH471211">
    <property type="protein sequence ID" value="EAW61340.1"/>
    <property type="molecule type" value="Genomic_DNA"/>
</dbReference>
<dbReference type="EMBL" id="CH471211">
    <property type="protein sequence ID" value="EAW61341.1"/>
    <property type="molecule type" value="Genomic_DNA"/>
</dbReference>
<dbReference type="EMBL" id="CH471211">
    <property type="protein sequence ID" value="EAW61344.1"/>
    <property type="molecule type" value="Genomic_DNA"/>
</dbReference>
<dbReference type="EMBL" id="BC032778">
    <property type="protein sequence ID" value="AAH32778.1"/>
    <property type="molecule type" value="mRNA"/>
</dbReference>
<dbReference type="EMBL" id="AL834535">
    <property type="protein sequence ID" value="CAD39191.1"/>
    <property type="molecule type" value="mRNA"/>
</dbReference>
<dbReference type="CCDS" id="CCDS7682.1">
    <molecule id="Q6QHF9-4"/>
</dbReference>
<dbReference type="CCDS" id="CCDS7683.1">
    <molecule id="Q6QHF9-2"/>
</dbReference>
<dbReference type="CCDS" id="CCDS7684.1">
    <molecule id="Q6QHF9-5"/>
</dbReference>
<dbReference type="RefSeq" id="NP_690875.1">
    <molecule id="Q6QHF9-2"/>
    <property type="nucleotide sequence ID" value="NM_152911.4"/>
</dbReference>
<dbReference type="RefSeq" id="NP_997010.1">
    <molecule id="Q6QHF9-5"/>
    <property type="nucleotide sequence ID" value="NM_207127.3"/>
</dbReference>
<dbReference type="RefSeq" id="NP_997011.1">
    <molecule id="Q6QHF9-4"/>
    <property type="nucleotide sequence ID" value="NM_207128.3"/>
</dbReference>
<dbReference type="SMR" id="Q6QHF9"/>
<dbReference type="BioGRID" id="128224">
    <property type="interactions" value="3"/>
</dbReference>
<dbReference type="FunCoup" id="Q6QHF9">
    <property type="interactions" value="804"/>
</dbReference>
<dbReference type="STRING" id="9606.ENSP00000278060"/>
<dbReference type="BindingDB" id="Q6QHF9"/>
<dbReference type="ChEMBL" id="CHEMBL2105"/>
<dbReference type="iPTMnet" id="Q6QHF9"/>
<dbReference type="PhosphoSitePlus" id="Q6QHF9"/>
<dbReference type="BioMuta" id="PAOX"/>
<dbReference type="DMDM" id="51316248"/>
<dbReference type="jPOST" id="Q6QHF9"/>
<dbReference type="MassIVE" id="Q6QHF9"/>
<dbReference type="PaxDb" id="9606-ENSP00000278060"/>
<dbReference type="PeptideAtlas" id="Q6QHF9"/>
<dbReference type="ProteomicsDB" id="67292">
    <molecule id="Q6QHF9-2"/>
</dbReference>
<dbReference type="ProteomicsDB" id="67294">
    <molecule id="Q6QHF9-4"/>
</dbReference>
<dbReference type="ProteomicsDB" id="67295">
    <molecule id="Q6QHF9-5"/>
</dbReference>
<dbReference type="ProteomicsDB" id="67296">
    <molecule id="Q6QHF9-6"/>
</dbReference>
<dbReference type="Antibodypedia" id="32666">
    <property type="antibodies" value="209 antibodies from 23 providers"/>
</dbReference>
<dbReference type="DNASU" id="196743"/>
<dbReference type="Ensembl" id="ENST00000278060.10">
    <molecule id="Q6QHF9-2"/>
    <property type="protein sequence ID" value="ENSP00000278060.5"/>
    <property type="gene ID" value="ENSG00000148832.16"/>
</dbReference>
<dbReference type="Ensembl" id="ENST00000356306.9">
    <molecule id="Q6QHF9-5"/>
    <property type="protein sequence ID" value="ENSP00000348654.5"/>
    <property type="gene ID" value="ENSG00000148832.16"/>
</dbReference>
<dbReference type="Ensembl" id="ENST00000357296.7">
    <molecule id="Q6QHF9-4"/>
    <property type="protein sequence ID" value="ENSP00000349847.3"/>
    <property type="gene ID" value="ENSG00000148832.16"/>
</dbReference>
<dbReference type="Ensembl" id="ENST00000476834.6">
    <molecule id="Q6QHF9-6"/>
    <property type="protein sequence ID" value="ENSP00000432737.1"/>
    <property type="gene ID" value="ENSG00000148832.16"/>
</dbReference>
<dbReference type="Ensembl" id="ENST00000480071.2">
    <molecule id="Q6QHF9-5"/>
    <property type="protein sequence ID" value="ENSP00000435514.1"/>
    <property type="gene ID" value="ENSG00000148832.16"/>
</dbReference>
<dbReference type="Ensembl" id="ENST00000483211.6">
    <molecule id="Q6QHF9-6"/>
    <property type="protein sequence ID" value="ENSP00000434550.1"/>
    <property type="gene ID" value="ENSG00000148832.16"/>
</dbReference>
<dbReference type="Ensembl" id="ENST00000529585.5">
    <molecule id="Q6QHF9-6"/>
    <property type="protein sequence ID" value="ENSP00000432517.1"/>
    <property type="gene ID" value="ENSG00000148832.16"/>
</dbReference>
<dbReference type="GeneID" id="196743"/>
<dbReference type="KEGG" id="hsa:196743"/>
<dbReference type="MANE-Select" id="ENST00000278060.10">
    <property type="protein sequence ID" value="ENSP00000278060.5"/>
    <property type="RefSeq nucleotide sequence ID" value="NM_152911.4"/>
    <property type="RefSeq protein sequence ID" value="NP_690875.1"/>
</dbReference>
<dbReference type="UCSC" id="uc001lmv.5">
    <molecule id="Q6QHF9-2"/>
    <property type="organism name" value="human"/>
</dbReference>
<dbReference type="AGR" id="HGNC:20837"/>
<dbReference type="CTD" id="196743"/>
<dbReference type="DisGeNET" id="196743"/>
<dbReference type="GeneCards" id="PAOX"/>
<dbReference type="HGNC" id="HGNC:20837">
    <property type="gene designation" value="PAOX"/>
</dbReference>
<dbReference type="HPA" id="ENSG00000148832">
    <property type="expression patterns" value="Tissue enhanced (testis)"/>
</dbReference>
<dbReference type="MIM" id="615853">
    <property type="type" value="gene"/>
</dbReference>
<dbReference type="neXtProt" id="NX_Q6QHF9"/>
<dbReference type="OpenTargets" id="ENSG00000148832"/>
<dbReference type="PharmGKB" id="PA134907695"/>
<dbReference type="VEuPathDB" id="HostDB:ENSG00000148832"/>
<dbReference type="eggNOG" id="KOG0685">
    <property type="taxonomic scope" value="Eukaryota"/>
</dbReference>
<dbReference type="GeneTree" id="ENSGT00940000158274"/>
<dbReference type="HOGENOM" id="CLU_004498_2_0_1"/>
<dbReference type="InParanoid" id="Q6QHF9"/>
<dbReference type="OMA" id="DVGCGWL"/>
<dbReference type="OrthoDB" id="2019015at2759"/>
<dbReference type="PAN-GO" id="Q6QHF9">
    <property type="GO annotations" value="1 GO annotation based on evolutionary models"/>
</dbReference>
<dbReference type="PhylomeDB" id="Q6QHF9"/>
<dbReference type="TreeFam" id="TF318348"/>
<dbReference type="BRENDA" id="1.5.3.13">
    <property type="organism ID" value="2681"/>
</dbReference>
<dbReference type="PathwayCommons" id="Q6QHF9"/>
<dbReference type="Reactome" id="R-HSA-141334">
    <property type="pathway name" value="PAOs oxidise polyamines to amines"/>
</dbReference>
<dbReference type="Reactome" id="R-HSA-351200">
    <property type="pathway name" value="Interconversion of polyamines"/>
</dbReference>
<dbReference type="Reactome" id="R-HSA-9033241">
    <property type="pathway name" value="Peroxisomal protein import"/>
</dbReference>
<dbReference type="SABIO-RK" id="Q6QHF9"/>
<dbReference type="UniPathway" id="UPA00826"/>
<dbReference type="BioGRID-ORCS" id="196743">
    <property type="hits" value="19 hits in 1157 CRISPR screens"/>
</dbReference>
<dbReference type="GeneWiki" id="PAOX"/>
<dbReference type="GenomeRNAi" id="196743"/>
<dbReference type="Pharos" id="Q6QHF9">
    <property type="development level" value="Tchem"/>
</dbReference>
<dbReference type="PRO" id="PR:Q6QHF9"/>
<dbReference type="Proteomes" id="UP000005640">
    <property type="component" value="Chromosome 10"/>
</dbReference>
<dbReference type="RNAct" id="Q6QHF9">
    <property type="molecule type" value="protein"/>
</dbReference>
<dbReference type="Bgee" id="ENSG00000148832">
    <property type="expression patterns" value="Expressed in sperm and 134 other cell types or tissues"/>
</dbReference>
<dbReference type="GO" id="GO:0005737">
    <property type="term" value="C:cytoplasm"/>
    <property type="evidence" value="ECO:0000318"/>
    <property type="project" value="GO_Central"/>
</dbReference>
<dbReference type="GO" id="GO:0005829">
    <property type="term" value="C:cytosol"/>
    <property type="evidence" value="ECO:0000304"/>
    <property type="project" value="Reactome"/>
</dbReference>
<dbReference type="GO" id="GO:0005782">
    <property type="term" value="C:peroxisomal matrix"/>
    <property type="evidence" value="ECO:0000304"/>
    <property type="project" value="Reactome"/>
</dbReference>
<dbReference type="GO" id="GO:0052903">
    <property type="term" value="F:N(1)-acetylpolyamine oxidase (3-acetamidopropanal-forming) activity"/>
    <property type="evidence" value="ECO:0007669"/>
    <property type="project" value="UniProtKB-EC"/>
</dbReference>
<dbReference type="GO" id="GO:0046592">
    <property type="term" value="F:polyamine oxidase activity"/>
    <property type="evidence" value="ECO:0000314"/>
    <property type="project" value="UniProtKB"/>
</dbReference>
<dbReference type="GO" id="GO:0006598">
    <property type="term" value="P:polyamine catabolic process"/>
    <property type="evidence" value="ECO:0000314"/>
    <property type="project" value="UniProtKB"/>
</dbReference>
<dbReference type="GO" id="GO:1901307">
    <property type="term" value="P:positive regulation of spermidine biosynthetic process"/>
    <property type="evidence" value="ECO:0000314"/>
    <property type="project" value="UniProtKB"/>
</dbReference>
<dbReference type="GO" id="GO:0009446">
    <property type="term" value="P:putrescine biosynthetic process"/>
    <property type="evidence" value="ECO:0000314"/>
    <property type="project" value="UniProtKB"/>
</dbReference>
<dbReference type="GO" id="GO:0009447">
    <property type="term" value="P:putrescine catabolic process"/>
    <property type="evidence" value="ECO:0000314"/>
    <property type="project" value="UniProtKB"/>
</dbReference>
<dbReference type="GO" id="GO:0046203">
    <property type="term" value="P:spermidine catabolic process"/>
    <property type="evidence" value="ECO:0000314"/>
    <property type="project" value="UniProtKB"/>
</dbReference>
<dbReference type="GO" id="GO:0046208">
    <property type="term" value="P:spermine catabolic process"/>
    <property type="evidence" value="ECO:0000314"/>
    <property type="project" value="UniProtKB"/>
</dbReference>
<dbReference type="FunFam" id="3.50.50.60:FF:000080">
    <property type="entry name" value="Spermine oxidase"/>
    <property type="match status" value="1"/>
</dbReference>
<dbReference type="FunFam" id="3.90.660.10:FF:000008">
    <property type="entry name" value="Spermine oxidase"/>
    <property type="match status" value="1"/>
</dbReference>
<dbReference type="Gene3D" id="3.90.660.10">
    <property type="match status" value="1"/>
</dbReference>
<dbReference type="Gene3D" id="3.50.50.60">
    <property type="entry name" value="FAD/NAD(P)-binding domain"/>
    <property type="match status" value="1"/>
</dbReference>
<dbReference type="InterPro" id="IPR002937">
    <property type="entry name" value="Amino_oxidase"/>
</dbReference>
<dbReference type="InterPro" id="IPR036188">
    <property type="entry name" value="FAD/NAD-bd_sf"/>
</dbReference>
<dbReference type="InterPro" id="IPR050281">
    <property type="entry name" value="Flavin_monoamine_oxidase"/>
</dbReference>
<dbReference type="PANTHER" id="PTHR10742">
    <property type="entry name" value="FLAVIN MONOAMINE OXIDASE"/>
    <property type="match status" value="1"/>
</dbReference>
<dbReference type="PANTHER" id="PTHR10742:SF405">
    <property type="entry name" value="PEROXISOMAL N(1)-ACETYL-SPERMINE_SPERMIDINE OXIDASE"/>
    <property type="match status" value="1"/>
</dbReference>
<dbReference type="Pfam" id="PF01593">
    <property type="entry name" value="Amino_oxidase"/>
    <property type="match status" value="1"/>
</dbReference>
<dbReference type="SUPFAM" id="SSF54373">
    <property type="entry name" value="FAD-linked reductases, C-terminal domain"/>
    <property type="match status" value="1"/>
</dbReference>
<dbReference type="SUPFAM" id="SSF51905">
    <property type="entry name" value="FAD/NAD(P)-binding domain"/>
    <property type="match status" value="1"/>
</dbReference>
<evidence type="ECO:0000250" key="1"/>
<evidence type="ECO:0000250" key="2">
    <source>
        <dbReference type="UniProtKB" id="Q8C0L6"/>
    </source>
</evidence>
<evidence type="ECO:0000255" key="3"/>
<evidence type="ECO:0000269" key="4">
    <source>
    </source>
</evidence>
<evidence type="ECO:0000305" key="5"/>
<evidence type="ECO:0007744" key="6">
    <source>
    </source>
</evidence>
<comment type="function">
    <text evidence="4">Flavoenzyme which catalyzes the oxidation of N(1)-acetylspermine to spermidine and is thus involved in the polyamine back-conversion (PubMed:12477380). Can also oxidize N(1)-acetylspermidine to putrescine. Substrate specificity: N(1)-acetylspermine = N(1)-acetylspermidine &gt; N(1),N(12)-diacylspermine &gt;&gt; spermine. Does not oxidize spermidine. Plays an important role in the regulation of polyamine intracellular concentration and has the potential to act as a determinant of cellular sensitivity to the antitumor polyamine analogs (PubMed:12477380).</text>
</comment>
<comment type="catalytic activity">
    <reaction evidence="4">
        <text>N(1)-acetylspermine + O2 + H2O = 3-acetamidopropanal + spermidine + H2O2</text>
        <dbReference type="Rhea" id="RHEA:25800"/>
        <dbReference type="ChEBI" id="CHEBI:15377"/>
        <dbReference type="ChEBI" id="CHEBI:15379"/>
        <dbReference type="ChEBI" id="CHEBI:16240"/>
        <dbReference type="ChEBI" id="CHEBI:30322"/>
        <dbReference type="ChEBI" id="CHEBI:57834"/>
        <dbReference type="ChEBI" id="CHEBI:58101"/>
        <dbReference type="EC" id="1.5.3.13"/>
    </reaction>
</comment>
<comment type="catalytic activity">
    <reaction evidence="4">
        <text>N(1)-acetylspermidine + O2 + H2O = 3-acetamidopropanal + putrescine + H2O2</text>
        <dbReference type="Rhea" id="RHEA:25812"/>
        <dbReference type="ChEBI" id="CHEBI:15377"/>
        <dbReference type="ChEBI" id="CHEBI:15379"/>
        <dbReference type="ChEBI" id="CHEBI:16240"/>
        <dbReference type="ChEBI" id="CHEBI:30322"/>
        <dbReference type="ChEBI" id="CHEBI:58324"/>
        <dbReference type="ChEBI" id="CHEBI:326268"/>
        <dbReference type="EC" id="1.5.3.13"/>
    </reaction>
</comment>
<comment type="catalytic activity">
    <reaction evidence="4">
        <text>N(1),N(12)-diacetylspermine + O2 + H2O = 3-acetamidopropanal + N(1)-acetylspermidine + H2O2</text>
        <dbReference type="Rhea" id="RHEA:25868"/>
        <dbReference type="ChEBI" id="CHEBI:15377"/>
        <dbReference type="ChEBI" id="CHEBI:15379"/>
        <dbReference type="ChEBI" id="CHEBI:16240"/>
        <dbReference type="ChEBI" id="CHEBI:30322"/>
        <dbReference type="ChEBI" id="CHEBI:58324"/>
        <dbReference type="ChEBI" id="CHEBI:58550"/>
        <dbReference type="EC" id="1.5.3.13"/>
    </reaction>
</comment>
<comment type="cofactor">
    <cofactor evidence="2">
        <name>FAD</name>
        <dbReference type="ChEBI" id="CHEBI:57692"/>
    </cofactor>
    <text evidence="2">Binds 1 FAD per subunit.</text>
</comment>
<comment type="pathway">
    <text evidence="4">Amine and polyamine metabolism; spermine metabolism.</text>
</comment>
<comment type="subunit">
    <text evidence="1">Monomer.</text>
</comment>
<comment type="subcellular location">
    <subcellularLocation>
        <location evidence="1">Peroxisome</location>
    </subcellularLocation>
    <subcellularLocation>
        <location evidence="1">Cytoplasm</location>
    </subcellularLocation>
</comment>
<comment type="alternative products">
    <event type="alternative splicing"/>
    <isoform>
        <id>Q6QHF9-2</id>
        <name>1</name>
        <sequence type="displayed"/>
    </isoform>
    <isoform>
        <id>Q6QHF9-6</id>
        <name>2</name>
        <sequence type="described" ref="VSP_060446 VSP_060447"/>
    </isoform>
    <isoform>
        <id>Q6QHF9-5</id>
        <name>3</name>
        <sequence type="described" ref="VSP_060448 VSP_060449"/>
    </isoform>
    <isoform>
        <id>Q6QHF9-4</id>
        <name>4</name>
        <sequence type="described" ref="VSP_060450 VSP_060451"/>
    </isoform>
</comment>
<comment type="tissue specificity">
    <text evidence="4">Widely expressed. Not detected in spleen. Expressed at lower level in neoplastic tissues.</text>
</comment>
<comment type="induction">
    <text>By polyamine analogs.</text>
</comment>
<comment type="miscellaneous">
    <text evidence="1">Oxidizes N(1)-acetylated polyamines on the exo-side of their N(4)-amino groups. Plant PAO oxidizes spermine on the endo-side of the N(4)-nitrogen (By similarity).</text>
</comment>
<comment type="miscellaneous">
    <molecule>Isoform 2</molecule>
    <text evidence="5">May be produced at very low levels due to a premature stop codon in the mRNA, leading to nonsense-mediated mRNA decay.</text>
</comment>
<comment type="similarity">
    <text evidence="5">Belongs to the flavin monoamine oxidase family.</text>
</comment>
<comment type="sequence caution" evidence="5">
    <conflict type="miscellaneous discrepancy">
        <sequence resource="EMBL-CDS" id="AAQ88784"/>
    </conflict>
    <text>Aberrant splicing.</text>
</comment>
<comment type="sequence caution" evidence="5">
    <conflict type="frameshift">
        <sequence resource="EMBL-CDS" id="AAS64377"/>
    </conflict>
</comment>
<comment type="sequence caution" evidence="5">
    <conflict type="miscellaneous discrepancy">
        <sequence resource="EMBL-CDS" id="AAS64379"/>
    </conflict>
    <text>Aberrant splicing.</text>
</comment>
<comment type="sequence caution" evidence="5">
    <conflict type="miscellaneous discrepancy">
        <sequence resource="EMBL-CDS" id="AAS64380"/>
    </conflict>
    <text>Probable cloning artifact.</text>
</comment>
<comment type="sequence caution" evidence="5">
    <conflict type="miscellaneous discrepancy">
        <sequence resource="EMBL-CDS" id="AAS64381"/>
    </conflict>
    <text>Probable cloning artifact.</text>
</comment>
<comment type="sequence caution" evidence="5">
    <conflict type="miscellaneous discrepancy">
        <sequence resource="EMBL-CDS" id="AAS64382"/>
    </conflict>
    <text>Aberrant splicing.</text>
</comment>
<comment type="sequence caution" evidence="5">
    <conflict type="miscellaneous discrepancy">
        <sequence resource="EMBL-CDS" id="AAS64383"/>
    </conflict>
    <text>Aberrant splicing.</text>
</comment>
<comment type="sequence caution" evidence="5">
    <conflict type="miscellaneous discrepancy">
        <sequence resource="EMBL-CDS" id="AAS64384"/>
    </conflict>
    <text>Aberrant splicing.</text>
</comment>
<reference key="1">
    <citation type="journal article" date="2003" name="J. Biol. Chem.">
        <title>Cloning, sequencing, and heterologous expression of the murine peroxisomal flavoprotein, N(1)-acetylated polyamine oxidase.</title>
        <authorList>
            <person name="Wu T."/>
            <person name="Yankovskaya V."/>
            <person name="McIntire W.S."/>
        </authorList>
    </citation>
    <scope>NUCLEOTIDE SEQUENCE [MRNA] (ISOFORM 1)</scope>
    <source>
        <tissue>Liver</tissue>
    </source>
</reference>
<reference key="2">
    <citation type="submission" date="2004-02" db="EMBL/GenBank/DDBJ databases">
        <title>Polyamine oxidase.</title>
        <authorList>
            <person name="Wang Y."/>
            <person name="Murray-Stewart T."/>
            <person name="Hacker A."/>
            <person name="Casero R.A. Jr."/>
        </authorList>
    </citation>
    <scope>NUCLEOTIDE SEQUENCE [MRNA] (ISOFORMS 2; 3 AND 4)</scope>
</reference>
<reference key="3">
    <citation type="journal article" date="2003" name="Genome Res.">
        <title>The secreted protein discovery initiative (SPDI), a large-scale effort to identify novel human secreted and transmembrane proteins: a bioinformatics assessment.</title>
        <authorList>
            <person name="Clark H.F."/>
            <person name="Gurney A.L."/>
            <person name="Abaya E."/>
            <person name="Baker K."/>
            <person name="Baldwin D.T."/>
            <person name="Brush J."/>
            <person name="Chen J."/>
            <person name="Chow B."/>
            <person name="Chui C."/>
            <person name="Crowley C."/>
            <person name="Currell B."/>
            <person name="Deuel B."/>
            <person name="Dowd P."/>
            <person name="Eaton D."/>
            <person name="Foster J.S."/>
            <person name="Grimaldi C."/>
            <person name="Gu Q."/>
            <person name="Hass P.E."/>
            <person name="Heldens S."/>
            <person name="Huang A."/>
            <person name="Kim H.S."/>
            <person name="Klimowski L."/>
            <person name="Jin Y."/>
            <person name="Johnson S."/>
            <person name="Lee J."/>
            <person name="Lewis L."/>
            <person name="Liao D."/>
            <person name="Mark M.R."/>
            <person name="Robbie E."/>
            <person name="Sanchez C."/>
            <person name="Schoenfeld J."/>
            <person name="Seshagiri S."/>
            <person name="Simmons L."/>
            <person name="Singh J."/>
            <person name="Smith V."/>
            <person name="Stinson J."/>
            <person name="Vagts A."/>
            <person name="Vandlen R.L."/>
            <person name="Watanabe C."/>
            <person name="Wieand D."/>
            <person name="Woods K."/>
            <person name="Xie M.-H."/>
            <person name="Yansura D.G."/>
            <person name="Yi S."/>
            <person name="Yu G."/>
            <person name="Yuan J."/>
            <person name="Zhang M."/>
            <person name="Zhang Z."/>
            <person name="Goddard A.D."/>
            <person name="Wood W.I."/>
            <person name="Godowski P.J."/>
            <person name="Gray A.M."/>
        </authorList>
    </citation>
    <scope>NUCLEOTIDE SEQUENCE [LARGE SCALE MRNA] (ISOFORM 1)</scope>
</reference>
<reference key="4">
    <citation type="journal article" date="2004" name="Nature">
        <title>The DNA sequence and comparative analysis of human chromosome 10.</title>
        <authorList>
            <person name="Deloukas P."/>
            <person name="Earthrowl M.E."/>
            <person name="Grafham D.V."/>
            <person name="Rubenfield M."/>
            <person name="French L."/>
            <person name="Steward C.A."/>
            <person name="Sims S.K."/>
            <person name="Jones M.C."/>
            <person name="Searle S."/>
            <person name="Scott C."/>
            <person name="Howe K."/>
            <person name="Hunt S.E."/>
            <person name="Andrews T.D."/>
            <person name="Gilbert J.G.R."/>
            <person name="Swarbreck D."/>
            <person name="Ashurst J.L."/>
            <person name="Taylor A."/>
            <person name="Battles J."/>
            <person name="Bird C.P."/>
            <person name="Ainscough R."/>
            <person name="Almeida J.P."/>
            <person name="Ashwell R.I.S."/>
            <person name="Ambrose K.D."/>
            <person name="Babbage A.K."/>
            <person name="Bagguley C.L."/>
            <person name="Bailey J."/>
            <person name="Banerjee R."/>
            <person name="Bates K."/>
            <person name="Beasley H."/>
            <person name="Bray-Allen S."/>
            <person name="Brown A.J."/>
            <person name="Brown J.Y."/>
            <person name="Burford D.C."/>
            <person name="Burrill W."/>
            <person name="Burton J."/>
            <person name="Cahill P."/>
            <person name="Camire D."/>
            <person name="Carter N.P."/>
            <person name="Chapman J.C."/>
            <person name="Clark S.Y."/>
            <person name="Clarke G."/>
            <person name="Clee C.M."/>
            <person name="Clegg S."/>
            <person name="Corby N."/>
            <person name="Coulson A."/>
            <person name="Dhami P."/>
            <person name="Dutta I."/>
            <person name="Dunn M."/>
            <person name="Faulkner L."/>
            <person name="Frankish A."/>
            <person name="Frankland J.A."/>
            <person name="Garner P."/>
            <person name="Garnett J."/>
            <person name="Gribble S."/>
            <person name="Griffiths C."/>
            <person name="Grocock R."/>
            <person name="Gustafson E."/>
            <person name="Hammond S."/>
            <person name="Harley J.L."/>
            <person name="Hart E."/>
            <person name="Heath P.D."/>
            <person name="Ho T.P."/>
            <person name="Hopkins B."/>
            <person name="Horne J."/>
            <person name="Howden P.J."/>
            <person name="Huckle E."/>
            <person name="Hynds C."/>
            <person name="Johnson C."/>
            <person name="Johnson D."/>
            <person name="Kana A."/>
            <person name="Kay M."/>
            <person name="Kimberley A.M."/>
            <person name="Kershaw J.K."/>
            <person name="Kokkinaki M."/>
            <person name="Laird G.K."/>
            <person name="Lawlor S."/>
            <person name="Lee H.M."/>
            <person name="Leongamornlert D.A."/>
            <person name="Laird G."/>
            <person name="Lloyd C."/>
            <person name="Lloyd D.M."/>
            <person name="Loveland J."/>
            <person name="Lovell J."/>
            <person name="McLaren S."/>
            <person name="McLay K.E."/>
            <person name="McMurray A."/>
            <person name="Mashreghi-Mohammadi M."/>
            <person name="Matthews L."/>
            <person name="Milne S."/>
            <person name="Nickerson T."/>
            <person name="Nguyen M."/>
            <person name="Overton-Larty E."/>
            <person name="Palmer S.A."/>
            <person name="Pearce A.V."/>
            <person name="Peck A.I."/>
            <person name="Pelan S."/>
            <person name="Phillimore B."/>
            <person name="Porter K."/>
            <person name="Rice C.M."/>
            <person name="Rogosin A."/>
            <person name="Ross M.T."/>
            <person name="Sarafidou T."/>
            <person name="Sehra H.K."/>
            <person name="Shownkeen R."/>
            <person name="Skuce C.D."/>
            <person name="Smith M."/>
            <person name="Standring L."/>
            <person name="Sycamore N."/>
            <person name="Tester J."/>
            <person name="Thorpe A."/>
            <person name="Torcasso W."/>
            <person name="Tracey A."/>
            <person name="Tromans A."/>
            <person name="Tsolas J."/>
            <person name="Wall M."/>
            <person name="Walsh J."/>
            <person name="Wang H."/>
            <person name="Weinstock K."/>
            <person name="West A.P."/>
            <person name="Willey D.L."/>
            <person name="Whitehead S.L."/>
            <person name="Wilming L."/>
            <person name="Wray P.W."/>
            <person name="Young L."/>
            <person name="Chen Y."/>
            <person name="Lovering R.C."/>
            <person name="Moschonas N.K."/>
            <person name="Siebert R."/>
            <person name="Fechtel K."/>
            <person name="Bentley D."/>
            <person name="Durbin R.M."/>
            <person name="Hubbard T."/>
            <person name="Doucette-Stamm L."/>
            <person name="Beck S."/>
            <person name="Smith D.R."/>
            <person name="Rogers J."/>
        </authorList>
    </citation>
    <scope>NUCLEOTIDE SEQUENCE [LARGE SCALE GENOMIC DNA]</scope>
</reference>
<reference key="5">
    <citation type="submission" date="2005-09" db="EMBL/GenBank/DDBJ databases">
        <authorList>
            <person name="Mural R.J."/>
            <person name="Istrail S."/>
            <person name="Sutton G.G."/>
            <person name="Florea L."/>
            <person name="Halpern A.L."/>
            <person name="Mobarry C.M."/>
            <person name="Lippert R."/>
            <person name="Walenz B."/>
            <person name="Shatkay H."/>
            <person name="Dew I."/>
            <person name="Miller J.R."/>
            <person name="Flanigan M.J."/>
            <person name="Edwards N.J."/>
            <person name="Bolanos R."/>
            <person name="Fasulo D."/>
            <person name="Halldorsson B.V."/>
            <person name="Hannenhalli S."/>
            <person name="Turner R."/>
            <person name="Yooseph S."/>
            <person name="Lu F."/>
            <person name="Nusskern D.R."/>
            <person name="Shue B.C."/>
            <person name="Zheng X.H."/>
            <person name="Zhong F."/>
            <person name="Delcher A.L."/>
            <person name="Huson D.H."/>
            <person name="Kravitz S.A."/>
            <person name="Mouchard L."/>
            <person name="Reinert K."/>
            <person name="Remington K.A."/>
            <person name="Clark A.G."/>
            <person name="Waterman M.S."/>
            <person name="Eichler E.E."/>
            <person name="Adams M.D."/>
            <person name="Hunkapiller M.W."/>
            <person name="Myers E.W."/>
            <person name="Venter J.C."/>
        </authorList>
    </citation>
    <scope>NUCLEOTIDE SEQUENCE [LARGE SCALE GENOMIC DNA]</scope>
</reference>
<reference key="6">
    <citation type="journal article" date="2004" name="Genome Res.">
        <title>The status, quality, and expansion of the NIH full-length cDNA project: the Mammalian Gene Collection (MGC).</title>
        <authorList>
            <consortium name="The MGC Project Team"/>
        </authorList>
    </citation>
    <scope>NUCLEOTIDE SEQUENCE [LARGE SCALE MRNA] (ISOFORM 1)</scope>
    <source>
        <tissue>Brain</tissue>
    </source>
</reference>
<reference key="7">
    <citation type="journal article" date="2007" name="BMC Genomics">
        <title>The full-ORF clone resource of the German cDNA consortium.</title>
        <authorList>
            <person name="Bechtel S."/>
            <person name="Rosenfelder H."/>
            <person name="Duda A."/>
            <person name="Schmidt C.P."/>
            <person name="Ernst U."/>
            <person name="Wellenreuther R."/>
            <person name="Mehrle A."/>
            <person name="Schuster C."/>
            <person name="Bahr A."/>
            <person name="Bloecker H."/>
            <person name="Heubner D."/>
            <person name="Hoerlein A."/>
            <person name="Michel G."/>
            <person name="Wedler H."/>
            <person name="Koehrer K."/>
            <person name="Ottenwaelder B."/>
            <person name="Poustka A."/>
            <person name="Wiemann S."/>
            <person name="Schupp I."/>
        </authorList>
    </citation>
    <scope>NUCLEOTIDE SEQUENCE [LARGE SCALE MRNA] OF 226-511 (ISOFORM 1)</scope>
    <source>
        <tissue>Testis</tissue>
    </source>
</reference>
<reference key="8">
    <citation type="journal article" date="2003" name="Biochem. J.">
        <title>Genomic identification and biochemical characterization of the mammalian polyamine oxidase involved in polyamine back-conversion.</title>
        <authorList>
            <person name="Vujcic S."/>
            <person name="Liang P."/>
            <person name="Diegelman P."/>
            <person name="Kramer D.L."/>
            <person name="Porter C.W."/>
        </authorList>
    </citation>
    <scope>FUNCTION</scope>
    <scope>CATALYTIC ACTIVITY</scope>
    <scope>PATHWAY</scope>
    <scope>TISSUE SPECIFICITY</scope>
</reference>
<reference key="9">
    <citation type="journal article" date="2012" name="Proc. Natl. Acad. Sci. U.S.A.">
        <title>N-terminal acetylome analyses and functional insights of the N-terminal acetyltransferase NatB.</title>
        <authorList>
            <person name="Van Damme P."/>
            <person name="Lasa M."/>
            <person name="Polevoda B."/>
            <person name="Gazquez C."/>
            <person name="Elosegui-Artola A."/>
            <person name="Kim D.S."/>
            <person name="De Juan-Pardo E."/>
            <person name="Demeyer K."/>
            <person name="Hole K."/>
            <person name="Larrea E."/>
            <person name="Timmerman E."/>
            <person name="Prieto J."/>
            <person name="Arnesen T."/>
            <person name="Sherman F."/>
            <person name="Gevaert K."/>
            <person name="Aldabe R."/>
        </authorList>
    </citation>
    <scope>ACETYLATION [LARGE SCALE ANALYSIS] AT MET-1</scope>
    <scope>IDENTIFICATION BY MASS SPECTROMETRY [LARGE SCALE ANALYSIS]</scope>
</reference>
<keyword id="KW-0007">Acetylation</keyword>
<keyword id="KW-0025">Alternative splicing</keyword>
<keyword id="KW-0963">Cytoplasm</keyword>
<keyword id="KW-0274">FAD</keyword>
<keyword id="KW-0285">Flavoprotein</keyword>
<keyword id="KW-0560">Oxidoreductase</keyword>
<keyword id="KW-0576">Peroxisome</keyword>
<keyword id="KW-1267">Proteomics identification</keyword>
<keyword id="KW-1185">Reference proteome</keyword>
<sequence length="511" mass="55513">MESTGSVGEAPGGPRVLVVGGGIAGLGAAQRLCGHSAFPHLRVLEATARAGGRIRSERCFGGVVEVGAHWIHGPSRGNPVFQLAAEYGLLGEKELSQENQLVETGGHVGLPSVSYASSGASVSLQLVAEMATLFYGLIDQTREFLHAAETPVPSVGEYLKKEIGQHVAGWTEDEETRKLKLAVLNSFFNLECCVSGTHSMDLVALAPFGEYTVLPGLDCTFSKGYQGLTNCMMAALPEDTVVFEKPVKTIHWNGSFQEAAFPGETFPVSVECEDGDRFPAHHVIVTVPLGFLREHLDTFFDPPLPAEKAEAIRKIGFGTNNKIFLEFEEPFWEPDCQLIQLVWEDTSPLEDAAPELQDAWFRKLIGFVVLPAFASVHVLCGFIAGLESEFMETLSDEEVLLCLTQVLRRVTGNPRLPAPKSVLRSRWHSAPYTRGSYSYVAVGSTGGDLDLLAQPLPADGAGAQLQILFAGEATHRTFYSTTHGALLSGWREADRLLSLWAPQVQQPRPRL</sequence>
<proteinExistence type="evidence at protein level"/>
<feature type="chain" id="PRO_0000099875" description="Peroxisomal N(1)-acetyl-spermine/spermidine oxidase">
    <location>
        <begin position="1"/>
        <end position="511"/>
    </location>
</feature>
<feature type="short sequence motif" description="Microbody targeting signal" evidence="3">
    <location>
        <begin position="509"/>
        <end position="511"/>
    </location>
</feature>
<feature type="binding site" evidence="2">
    <location>
        <position position="24"/>
    </location>
    <ligand>
        <name>FAD</name>
        <dbReference type="ChEBI" id="CHEBI:57692"/>
    </ligand>
</feature>
<feature type="binding site" evidence="2">
    <location>
        <position position="45"/>
    </location>
    <ligand>
        <name>FAD</name>
        <dbReference type="ChEBI" id="CHEBI:57692"/>
    </ligand>
</feature>
<feature type="binding site" evidence="2">
    <location>
        <position position="53"/>
    </location>
    <ligand>
        <name>FAD</name>
        <dbReference type="ChEBI" id="CHEBI:57692"/>
    </ligand>
</feature>
<feature type="binding site" evidence="2">
    <location>
        <begin position="69"/>
        <end position="70"/>
    </location>
    <ligand>
        <name>FAD</name>
        <dbReference type="ChEBI" id="CHEBI:57692"/>
    </ligand>
</feature>
<feature type="binding site" evidence="2">
    <location>
        <position position="72"/>
    </location>
    <ligand>
        <name>substrate</name>
    </ligand>
</feature>
<feature type="binding site" evidence="2">
    <location>
        <position position="194"/>
    </location>
    <ligand>
        <name>substrate</name>
    </ligand>
</feature>
<feature type="binding site" evidence="2">
    <location>
        <position position="247"/>
    </location>
    <ligand>
        <name>FAD</name>
        <dbReference type="ChEBI" id="CHEBI:57692"/>
    </ligand>
</feature>
<feature type="binding site" evidence="2">
    <location>
        <position position="320"/>
    </location>
    <ligand>
        <name>substrate</name>
    </ligand>
</feature>
<feature type="binding site" evidence="2">
    <location>
        <position position="472"/>
    </location>
    <ligand>
        <name>FAD</name>
        <dbReference type="ChEBI" id="CHEBI:57692"/>
    </ligand>
</feature>
<feature type="binding site" evidence="2">
    <location>
        <begin position="481"/>
        <end position="482"/>
    </location>
    <ligand>
        <name>FAD</name>
        <dbReference type="ChEBI" id="CHEBI:57692"/>
    </ligand>
</feature>
<feature type="modified residue" description="N-acetylmethionine" evidence="6">
    <location>
        <position position="1"/>
    </location>
</feature>
<feature type="splice variant" id="VSP_060446" description="In isoform 2.">
    <original>GVVEVGAH</original>
    <variation>AIKDSQTA</variation>
    <location>
        <begin position="62"/>
        <end position="69"/>
    </location>
</feature>
<feature type="splice variant" id="VSP_060447" description="In isoform 2.">
    <location>
        <begin position="70"/>
        <end position="511"/>
    </location>
</feature>
<feature type="splice variant" id="VSP_060448" description="In isoform 3.">
    <original>FLREHLDTFFDPPLPAEKAEAIRKIGFGTNNKIFL</original>
    <variation>LSTFSVGSLPDLSLSSWRLCRMKKYFCVSPKCSGE</variation>
    <location>
        <begin position="291"/>
        <end position="325"/>
    </location>
</feature>
<feature type="splice variant" id="VSP_060449" description="In isoform 3.">
    <location>
        <begin position="326"/>
        <end position="511"/>
    </location>
</feature>
<feature type="splice variant" id="VSP_060450" description="In isoform 4.">
    <original>GNPRLPAPKSVLRSRWHSAPYTRGSYSYVAVGSTGGDLDLLAQPLPADGAGAQLQILFAGEATHRTFYSTTHGAL</original>
    <variation>APDPVCGGSHTSHVLLHDARGSAVGMEGGRPPPQSVGPAGAAAQAQALAGPSLLCSTRVGGRLGPSFLLTDFSLA</variation>
    <location>
        <begin position="412"/>
        <end position="486"/>
    </location>
</feature>
<feature type="splice variant" id="VSP_060451" description="In isoform 4.">
    <location>
        <begin position="487"/>
        <end position="511"/>
    </location>
</feature>
<feature type="sequence conflict" description="In Ref. 2; AAS64378." evidence="5" ref="2">
    <original>I</original>
    <variation>M</variation>
    <location>
        <position position="23"/>
    </location>
</feature>
<feature type="sequence conflict" description="In Ref. 2; AAS64378." evidence="5" ref="2">
    <original>H</original>
    <variation>Q</variation>
    <location>
        <position position="40"/>
    </location>
</feature>
<feature type="sequence conflict" description="In Ref. 1; AAN40706." evidence="5" ref="1">
    <original>R</original>
    <variation>Q</variation>
    <location>
        <position position="76"/>
    </location>
</feature>
<feature type="sequence conflict" description="In Ref. 1; AAN40706." evidence="5" ref="1">
    <original>A</original>
    <variation>V</variation>
    <location>
        <position position="85"/>
    </location>
</feature>
<feature type="sequence conflict" description="In Ref. 2; AAS64376." evidence="5" ref="2">
    <original>E</original>
    <variation>G</variation>
    <location>
        <position position="238"/>
    </location>
</feature>
<feature type="sequence conflict" description="In Ref. 2; AAS64373." evidence="5" ref="2">
    <original>E</original>
    <variation>K</variation>
    <location>
        <position position="258"/>
    </location>
</feature>
<feature type="sequence conflict" description="In Ref. 2; AAS64381." evidence="5" ref="2">
    <original>L</original>
    <variation>F</variation>
    <location>
        <position position="364"/>
    </location>
</feature>
<feature type="sequence conflict" description="In Ref. 1; AAN40706." evidence="5" ref="1">
    <original>V</original>
    <variation>G</variation>
    <location>
        <position position="368"/>
    </location>
</feature>
<feature type="sequence conflict" description="In Ref. 2; AAS64376." evidence="5" ref="2">
    <original>Q</original>
    <variation>E</variation>
    <location sequence="Q6QHF9-4">
        <position position="457"/>
    </location>
</feature>
<gene>
    <name type="primary">PAOX</name>
    <name type="synonym">PAO</name>
    <name type="ORF">UNQ1923/PRO4398</name>
</gene>